<protein>
    <recommendedName>
        <fullName>Acetylxylan esterase A</fullName>
        <ecNumber>3.1.1.72</ecNumber>
    </recommendedName>
    <alternativeName>
        <fullName>AXE I</fullName>
    </alternativeName>
    <alternativeName>
        <fullName>Acetylxylan esterase 1</fullName>
    </alternativeName>
</protein>
<comment type="function">
    <text evidence="5 6">Acetylxylan esterase involved in the hydrolysis of xylan, a major structural heterogeneous polysaccharide found in plant biomass representing the second most abundant polysaccharide in the biosphere, after cellulose. Degrades acetylated xylans by cleaving acetyl side groups from the hetero-xylan backbone.</text>
</comment>
<comment type="catalytic activity">
    <reaction>
        <text>Deacetylation of xylans and xylo-oligosaccharides.</text>
        <dbReference type="EC" id="3.1.1.72"/>
    </reaction>
</comment>
<comment type="activity regulation">
    <text evidence="5">Inactivated by phenylmethylsulfonylfluorid (PMSF), a specific inhibitor of serine esterases.</text>
</comment>
<comment type="biophysicochemical properties">
    <phDependence>
        <text evidence="6">Optimum pH is 5.3.</text>
    </phDependence>
    <temperatureDependence>
        <text evidence="6">Optimum temperature is 50 degrees Celsius.</text>
    </temperatureDependence>
</comment>
<comment type="pathway">
    <text>Glycan degradation; xylan degradation.</text>
</comment>
<comment type="subunit">
    <text evidence="1">Monomer.</text>
</comment>
<comment type="subcellular location">
    <subcellularLocation>
        <location evidence="6">Secreted</location>
    </subcellularLocation>
</comment>
<comment type="domain">
    <text>Has a modular structure: a carbohydrate esterase catalytic module at the N-terminus, a linker rich in serines and threonines, and a C-terminal carbohydrate-binding module (CBM). The genes for catalytic modules and CBMs seem to have evolved separately and have been linked by gene fusion.</text>
</comment>
<comment type="PTM">
    <text evidence="5">Glycosylated.</text>
</comment>
<comment type="miscellaneous">
    <text>The promoter contains 1 xlnR-binding sequence (a transcriptional activator in the absence of glucose), 5 creA-binding sequences (a negatively acting regulatory protein mediating carbon catabolyte repression), 1 pacC-binding sequence (a pH regulator), 3 alcR-binding sequences (an activator of alcohol and acetaldehyde dehydrogenase genes) and 3 areA-binding sequences (a nitrogen metabolism activator).</text>
</comment>
<comment type="similarity">
    <text evidence="7">Belongs to the carbohydrate esterase 1 (CE1) family. AxeA subfamily.</text>
</comment>
<dbReference type="EC" id="3.1.1.72"/>
<dbReference type="EMBL" id="AF529173">
    <property type="protein sequence ID" value="AAM93261.1"/>
    <property type="molecule type" value="Genomic_DNA"/>
</dbReference>
<dbReference type="SMR" id="Q8NJP6"/>
<dbReference type="CAZy" id="CBM1">
    <property type="family name" value="Carbohydrate-Binding Module Family 1"/>
</dbReference>
<dbReference type="ESTHER" id="penpu-AXEI">
    <property type="family name" value="Esterase_phb"/>
</dbReference>
<dbReference type="GlyCosmos" id="Q8NJP6">
    <property type="glycosylation" value="2 sites, No reported glycans"/>
</dbReference>
<dbReference type="BioCyc" id="MetaCyc:MONOMER-16880"/>
<dbReference type="BRENDA" id="3.1.1.72">
    <property type="organism ID" value="4635"/>
</dbReference>
<dbReference type="UniPathway" id="UPA00114"/>
<dbReference type="GO" id="GO:0005576">
    <property type="term" value="C:extracellular region"/>
    <property type="evidence" value="ECO:0007669"/>
    <property type="project" value="UniProtKB-SubCell"/>
</dbReference>
<dbReference type="GO" id="GO:0046555">
    <property type="term" value="F:acetylxylan esterase activity"/>
    <property type="evidence" value="ECO:0007669"/>
    <property type="project" value="UniProtKB-EC"/>
</dbReference>
<dbReference type="GO" id="GO:0030248">
    <property type="term" value="F:cellulose binding"/>
    <property type="evidence" value="ECO:0007669"/>
    <property type="project" value="InterPro"/>
</dbReference>
<dbReference type="GO" id="GO:0030245">
    <property type="term" value="P:cellulose catabolic process"/>
    <property type="evidence" value="ECO:0007669"/>
    <property type="project" value="UniProtKB-KW"/>
</dbReference>
<dbReference type="GO" id="GO:0045493">
    <property type="term" value="P:xylan catabolic process"/>
    <property type="evidence" value="ECO:0007669"/>
    <property type="project" value="UniProtKB-UniPathway"/>
</dbReference>
<dbReference type="Gene3D" id="3.40.50.1820">
    <property type="entry name" value="alpha/beta hydrolase"/>
    <property type="match status" value="1"/>
</dbReference>
<dbReference type="InterPro" id="IPR029058">
    <property type="entry name" value="AB_hydrolase_fold"/>
</dbReference>
<dbReference type="InterPro" id="IPR000254">
    <property type="entry name" value="Cellulose-bd_dom_fun"/>
</dbReference>
<dbReference type="InterPro" id="IPR010126">
    <property type="entry name" value="Esterase_phb"/>
</dbReference>
<dbReference type="InterPro" id="IPR050955">
    <property type="entry name" value="Plant_Biomass_Hydrol_Est"/>
</dbReference>
<dbReference type="NCBIfam" id="TIGR01840">
    <property type="entry name" value="esterase_phb"/>
    <property type="match status" value="1"/>
</dbReference>
<dbReference type="PANTHER" id="PTHR43037:SF3">
    <property type="entry name" value="FERULOYL ESTERASE B"/>
    <property type="match status" value="1"/>
</dbReference>
<dbReference type="PANTHER" id="PTHR43037">
    <property type="entry name" value="UNNAMED PRODUCT-RELATED"/>
    <property type="match status" value="1"/>
</dbReference>
<dbReference type="Pfam" id="PF00734">
    <property type="entry name" value="CBM_1"/>
    <property type="match status" value="1"/>
</dbReference>
<dbReference type="Pfam" id="PF10503">
    <property type="entry name" value="Esterase_PHB"/>
    <property type="match status" value="1"/>
</dbReference>
<dbReference type="SMART" id="SM00236">
    <property type="entry name" value="fCBD"/>
    <property type="match status" value="1"/>
</dbReference>
<dbReference type="SUPFAM" id="SSF53474">
    <property type="entry name" value="alpha/beta-Hydrolases"/>
    <property type="match status" value="2"/>
</dbReference>
<dbReference type="PROSITE" id="PS00562">
    <property type="entry name" value="CBM1_1"/>
    <property type="match status" value="1"/>
</dbReference>
<dbReference type="PROSITE" id="PS51164">
    <property type="entry name" value="CBM1_2"/>
    <property type="match status" value="1"/>
</dbReference>
<accession>Q8NJP6</accession>
<organism>
    <name type="scientific">Talaromyces purpureogenus</name>
    <name type="common">Soft rot fungus</name>
    <name type="synonym">Penicillium purpureogenum</name>
    <dbReference type="NCBI Taxonomy" id="1266744"/>
    <lineage>
        <taxon>Eukaryota</taxon>
        <taxon>Fungi</taxon>
        <taxon>Dikarya</taxon>
        <taxon>Ascomycota</taxon>
        <taxon>Pezizomycotina</taxon>
        <taxon>Eurotiomycetes</taxon>
        <taxon>Eurotiomycetidae</taxon>
        <taxon>Eurotiales</taxon>
        <taxon>Trichocomaceae</taxon>
        <taxon>Talaromyces</taxon>
        <taxon>Talaromyces sect. Talaromyces</taxon>
    </lineage>
</organism>
<sequence>MKSLSFSFLVTLFLYLTLSSARTLGKDVNKRVTAGSLQQVTGFGDNASGTLMYIYVPKNLATNPGIVVAIHYCTGTAQAYYTGSPYAQLAEQYGFIVIYPQSPYSGTCWDVSSQAALTHNGGGDSNSIANMVTWTISQYNANTAKVFVTGSSSGAMMTNVMAATYPELFAAATVYSGVGAGCFYSSSNQADAWNSSCATGSVISTPAVWGGIAKNMYSGYSGSRPRMQIYHGSADTTLYPQNYYETCKQWAGVFGYNYDSPQSTLANTPDANYQTTNWGPNLQGIYATGVGHTVPIHGAKDMEWFGFSGSGSSSTTTASATKTSTTSTTSTKTTSSTSSTTTSSTGVAAHWGQCGGSGWTGPTVCESGYTCTYSNAWYSQCL</sequence>
<name>AXE1_TALPU</name>
<gene>
    <name type="primary">axeA</name>
    <name type="synonym">aceA</name>
    <name type="synonym">axe-1</name>
    <name type="synonym">axeI</name>
</gene>
<proteinExistence type="evidence at protein level"/>
<evidence type="ECO:0000250" key="1"/>
<evidence type="ECO:0000255" key="2"/>
<evidence type="ECO:0000255" key="3">
    <source>
        <dbReference type="PROSITE-ProRule" id="PRU00597"/>
    </source>
</evidence>
<evidence type="ECO:0000256" key="4">
    <source>
        <dbReference type="SAM" id="MobiDB-lite"/>
    </source>
</evidence>
<evidence type="ECO:0000269" key="5">
    <source>
    </source>
</evidence>
<evidence type="ECO:0000269" key="6">
    <source>
    </source>
</evidence>
<evidence type="ECO:0000305" key="7"/>
<keyword id="KW-0119">Carbohydrate metabolism</keyword>
<keyword id="KW-0136">Cellulose degradation</keyword>
<keyword id="KW-0165">Cleavage on pair of basic residues</keyword>
<keyword id="KW-0903">Direct protein sequencing</keyword>
<keyword id="KW-0325">Glycoprotein</keyword>
<keyword id="KW-0378">Hydrolase</keyword>
<keyword id="KW-0624">Polysaccharide degradation</keyword>
<keyword id="KW-0964">Secreted</keyword>
<keyword id="KW-0719">Serine esterase</keyword>
<keyword id="KW-0732">Signal</keyword>
<reference key="1">
    <citation type="journal article" date="2006" name="Mycol. Res.">
        <title>Penicillium purpurogenum produces a family 1 acetyl xylan esterase containing a carbohydrate-binding module: characterization of the protein and its gene.</title>
        <authorList>
            <person name="Gordillo F."/>
            <person name="Caputo V."/>
            <person name="Peirano A."/>
            <person name="Chavez R."/>
            <person name="Van Beeumen J."/>
            <person name="Vandenberghe I."/>
            <person name="Claeyssens M."/>
            <person name="Bull P."/>
            <person name="Ravanal M.C."/>
            <person name="Eyzaguirre J."/>
        </authorList>
    </citation>
    <scope>NUCLEOTIDE SEQUENCE [GENOMIC DNA]</scope>
    <scope>PROTEIN SEQUENCE OF 32-67; 215-220 AND 227-248</scope>
    <scope>GLYCOSYLATION</scope>
    <scope>FUNCTION</scope>
    <scope>ACTIVITY REGULATION</scope>
</reference>
<reference key="2">
    <citation type="journal article" date="1996" name="Biotechnol. Appl. Biochem.">
        <title>Purification and characterization of two acetyl xylan esterases from Penicillium purpurogenum.</title>
        <authorList>
            <person name="Egana L."/>
            <person name="Gutierrez R."/>
            <person name="Caputo V."/>
            <person name="Peirano A."/>
            <person name="Steiner J."/>
            <person name="Eyzaguirre J."/>
        </authorList>
    </citation>
    <scope>PROTEIN SEQUENCE OF 32-51</scope>
    <scope>FUNCTION</scope>
    <scope>BIOPHYSICOCHEMICAL PROPERTIES</scope>
    <scope>SUBCELLULAR LOCATION</scope>
</reference>
<feature type="signal peptide" evidence="2">
    <location>
        <begin position="1"/>
        <end position="21"/>
    </location>
</feature>
<feature type="propeptide" id="PRO_0000234626" evidence="5 6">
    <location>
        <begin position="22"/>
        <end position="31"/>
    </location>
</feature>
<feature type="chain" id="PRO_0000234627" description="Acetylxylan esterase A">
    <location>
        <begin position="32"/>
        <end position="382"/>
    </location>
</feature>
<feature type="domain" description="CBM1" evidence="3">
    <location>
        <begin position="346"/>
        <end position="382"/>
    </location>
</feature>
<feature type="region of interest" description="Catalytic" evidence="1">
    <location>
        <begin position="35"/>
        <end position="307"/>
    </location>
</feature>
<feature type="region of interest" description="Ser/Thr-rich linker">
    <location>
        <begin position="308"/>
        <end position="345"/>
    </location>
</feature>
<feature type="region of interest" description="Disordered" evidence="4">
    <location>
        <begin position="313"/>
        <end position="346"/>
    </location>
</feature>
<feature type="compositionally biased region" description="Low complexity" evidence="4">
    <location>
        <begin position="313"/>
        <end position="345"/>
    </location>
</feature>
<feature type="active site" description="Charge relay system" evidence="1">
    <location>
        <position position="152"/>
    </location>
</feature>
<feature type="glycosylation site" description="N-linked (GlcNAc...) asparagine" evidence="2">
    <location>
        <position position="46"/>
    </location>
</feature>
<feature type="glycosylation site" description="N-linked (GlcNAc...) asparagine" evidence="2">
    <location>
        <position position="194"/>
    </location>
</feature>
<feature type="sequence conflict" description="In Ref. 2; AA sequence." evidence="7" ref="2">
    <original>S</original>
    <variation>C</variation>
    <location>
        <position position="36"/>
    </location>
</feature>